<proteinExistence type="inferred from homology"/>
<feature type="chain" id="PRO_1000003380" description="3-deoxy-manno-octulosonate cytidylyltransferase">
    <location>
        <begin position="1"/>
        <end position="248"/>
    </location>
</feature>
<evidence type="ECO:0000255" key="1">
    <source>
        <dbReference type="HAMAP-Rule" id="MF_00057"/>
    </source>
</evidence>
<comment type="function">
    <text evidence="1">Activates KDO (a required 8-carbon sugar) for incorporation into bacterial lipopolysaccharide in Gram-negative bacteria.</text>
</comment>
<comment type="catalytic activity">
    <reaction evidence="1">
        <text>3-deoxy-alpha-D-manno-oct-2-ulosonate + CTP = CMP-3-deoxy-beta-D-manno-octulosonate + diphosphate</text>
        <dbReference type="Rhea" id="RHEA:23448"/>
        <dbReference type="ChEBI" id="CHEBI:33019"/>
        <dbReference type="ChEBI" id="CHEBI:37563"/>
        <dbReference type="ChEBI" id="CHEBI:85986"/>
        <dbReference type="ChEBI" id="CHEBI:85987"/>
        <dbReference type="EC" id="2.7.7.38"/>
    </reaction>
</comment>
<comment type="pathway">
    <text evidence="1">Nucleotide-sugar biosynthesis; CMP-3-deoxy-D-manno-octulosonate biosynthesis; CMP-3-deoxy-D-manno-octulosonate from 3-deoxy-D-manno-octulosonate and CTP: step 1/1.</text>
</comment>
<comment type="pathway">
    <text evidence="1">Bacterial outer membrane biogenesis; lipopolysaccharide biosynthesis.</text>
</comment>
<comment type="subcellular location">
    <subcellularLocation>
        <location evidence="1">Cytoplasm</location>
    </subcellularLocation>
</comment>
<comment type="similarity">
    <text evidence="1">Belongs to the KdsB family.</text>
</comment>
<name>KDSB_SALPA</name>
<reference key="1">
    <citation type="journal article" date="2004" name="Nat. Genet.">
        <title>Comparison of genome degradation in Paratyphi A and Typhi, human-restricted serovars of Salmonella enterica that cause typhoid.</title>
        <authorList>
            <person name="McClelland M."/>
            <person name="Sanderson K.E."/>
            <person name="Clifton S.W."/>
            <person name="Latreille P."/>
            <person name="Porwollik S."/>
            <person name="Sabo A."/>
            <person name="Meyer R."/>
            <person name="Bieri T."/>
            <person name="Ozersky P."/>
            <person name="McLellan M."/>
            <person name="Harkins C.R."/>
            <person name="Wang C."/>
            <person name="Nguyen C."/>
            <person name="Berghoff A."/>
            <person name="Elliott G."/>
            <person name="Kohlberg S."/>
            <person name="Strong C."/>
            <person name="Du F."/>
            <person name="Carter J."/>
            <person name="Kremizki C."/>
            <person name="Layman D."/>
            <person name="Leonard S."/>
            <person name="Sun H."/>
            <person name="Fulton L."/>
            <person name="Nash W."/>
            <person name="Miner T."/>
            <person name="Minx P."/>
            <person name="Delehaunty K."/>
            <person name="Fronick C."/>
            <person name="Magrini V."/>
            <person name="Nhan M."/>
            <person name="Warren W."/>
            <person name="Florea L."/>
            <person name="Spieth J."/>
            <person name="Wilson R.K."/>
        </authorList>
    </citation>
    <scope>NUCLEOTIDE SEQUENCE [LARGE SCALE GENOMIC DNA]</scope>
    <source>
        <strain>ATCC 9150 / SARB42</strain>
    </source>
</reference>
<dbReference type="EC" id="2.7.7.38" evidence="1"/>
<dbReference type="EMBL" id="CP000026">
    <property type="protein sequence ID" value="AAV77726.1"/>
    <property type="molecule type" value="Genomic_DNA"/>
</dbReference>
<dbReference type="RefSeq" id="WP_000011567.1">
    <property type="nucleotide sequence ID" value="NC_006511.1"/>
</dbReference>
<dbReference type="SMR" id="Q5PGF5"/>
<dbReference type="KEGG" id="spt:SPA1810"/>
<dbReference type="HOGENOM" id="CLU_065038_1_0_6"/>
<dbReference type="UniPathway" id="UPA00030"/>
<dbReference type="UniPathway" id="UPA00358">
    <property type="reaction ID" value="UER00476"/>
</dbReference>
<dbReference type="Proteomes" id="UP000008185">
    <property type="component" value="Chromosome"/>
</dbReference>
<dbReference type="GO" id="GO:0005829">
    <property type="term" value="C:cytosol"/>
    <property type="evidence" value="ECO:0007669"/>
    <property type="project" value="TreeGrafter"/>
</dbReference>
<dbReference type="GO" id="GO:0008690">
    <property type="term" value="F:3-deoxy-manno-octulosonate cytidylyltransferase activity"/>
    <property type="evidence" value="ECO:0007669"/>
    <property type="project" value="UniProtKB-UniRule"/>
</dbReference>
<dbReference type="GO" id="GO:0033468">
    <property type="term" value="P:CMP-keto-3-deoxy-D-manno-octulosonic acid biosynthetic process"/>
    <property type="evidence" value="ECO:0007669"/>
    <property type="project" value="UniProtKB-UniRule"/>
</dbReference>
<dbReference type="GO" id="GO:0009103">
    <property type="term" value="P:lipopolysaccharide biosynthetic process"/>
    <property type="evidence" value="ECO:0007669"/>
    <property type="project" value="UniProtKB-UniRule"/>
</dbReference>
<dbReference type="CDD" id="cd02517">
    <property type="entry name" value="CMP-KDO-Synthetase"/>
    <property type="match status" value="1"/>
</dbReference>
<dbReference type="FunFam" id="3.90.550.10:FF:000011">
    <property type="entry name" value="3-deoxy-manno-octulosonate cytidylyltransferase"/>
    <property type="match status" value="1"/>
</dbReference>
<dbReference type="Gene3D" id="3.90.550.10">
    <property type="entry name" value="Spore Coat Polysaccharide Biosynthesis Protein SpsA, Chain A"/>
    <property type="match status" value="1"/>
</dbReference>
<dbReference type="HAMAP" id="MF_00057">
    <property type="entry name" value="KdsB"/>
    <property type="match status" value="1"/>
</dbReference>
<dbReference type="InterPro" id="IPR003329">
    <property type="entry name" value="Cytidylyl_trans"/>
</dbReference>
<dbReference type="InterPro" id="IPR004528">
    <property type="entry name" value="KdsB"/>
</dbReference>
<dbReference type="InterPro" id="IPR029044">
    <property type="entry name" value="Nucleotide-diphossugar_trans"/>
</dbReference>
<dbReference type="NCBIfam" id="TIGR00466">
    <property type="entry name" value="kdsB"/>
    <property type="match status" value="1"/>
</dbReference>
<dbReference type="NCBIfam" id="NF003950">
    <property type="entry name" value="PRK05450.1-3"/>
    <property type="match status" value="1"/>
</dbReference>
<dbReference type="NCBIfam" id="NF003952">
    <property type="entry name" value="PRK05450.1-5"/>
    <property type="match status" value="1"/>
</dbReference>
<dbReference type="NCBIfam" id="NF009905">
    <property type="entry name" value="PRK13368.1"/>
    <property type="match status" value="1"/>
</dbReference>
<dbReference type="PANTHER" id="PTHR42866">
    <property type="entry name" value="3-DEOXY-MANNO-OCTULOSONATE CYTIDYLYLTRANSFERASE"/>
    <property type="match status" value="1"/>
</dbReference>
<dbReference type="PANTHER" id="PTHR42866:SF2">
    <property type="entry name" value="3-DEOXY-MANNO-OCTULOSONATE CYTIDYLYLTRANSFERASE, MITOCHONDRIAL"/>
    <property type="match status" value="1"/>
</dbReference>
<dbReference type="Pfam" id="PF02348">
    <property type="entry name" value="CTP_transf_3"/>
    <property type="match status" value="1"/>
</dbReference>
<dbReference type="SUPFAM" id="SSF53448">
    <property type="entry name" value="Nucleotide-diphospho-sugar transferases"/>
    <property type="match status" value="1"/>
</dbReference>
<keyword id="KW-0963">Cytoplasm</keyword>
<keyword id="KW-0448">Lipopolysaccharide biosynthesis</keyword>
<keyword id="KW-0548">Nucleotidyltransferase</keyword>
<keyword id="KW-0808">Transferase</keyword>
<organism>
    <name type="scientific">Salmonella paratyphi A (strain ATCC 9150 / SARB42)</name>
    <dbReference type="NCBI Taxonomy" id="295319"/>
    <lineage>
        <taxon>Bacteria</taxon>
        <taxon>Pseudomonadati</taxon>
        <taxon>Pseudomonadota</taxon>
        <taxon>Gammaproteobacteria</taxon>
        <taxon>Enterobacterales</taxon>
        <taxon>Enterobacteriaceae</taxon>
        <taxon>Salmonella</taxon>
    </lineage>
</organism>
<protein>
    <recommendedName>
        <fullName evidence="1">3-deoxy-manno-octulosonate cytidylyltransferase</fullName>
        <ecNumber evidence="1">2.7.7.38</ecNumber>
    </recommendedName>
    <alternativeName>
        <fullName evidence="1">CMP-2-keto-3-deoxyoctulosonic acid synthase</fullName>
        <shortName evidence="1">CKS</shortName>
        <shortName evidence="1">CMP-KDO synthase</shortName>
    </alternativeName>
</protein>
<gene>
    <name evidence="1" type="primary">kdsB</name>
    <name type="ordered locus">SPA1810</name>
</gene>
<sequence>MSFVVIIPARFSSTRLLGKPLVDINGKPMIVHVLERARESGAERIIVATDHEDVARAVEAAGGEVCMTRADHQSGTERLAEVVEKCGFSDDTVIVNVQGDEPMIPAVIIRQVAENLAQRQVGMATLAVPIHSAEEAFNPNAVKVVLDAEGYALYFSRATIPWDRDRFAKSLETVGDACLRHLGIYGYRAGFIRRYVSWQPSPLEHIEMLEQLRVLWYGEKIHVAVAKAVPGTGVDTADDLERVRAEMR</sequence>
<accession>Q5PGF5</accession>